<name>OCT2_ARATH</name>
<dbReference type="EMBL" id="AC002986">
    <property type="protein sequence ID" value="AAC17057.1"/>
    <property type="molecule type" value="Genomic_DNA"/>
</dbReference>
<dbReference type="EMBL" id="CP002684">
    <property type="protein sequence ID" value="AEE36234.1"/>
    <property type="molecule type" value="Genomic_DNA"/>
</dbReference>
<dbReference type="PIR" id="T01019">
    <property type="entry name" value="T01019"/>
</dbReference>
<dbReference type="RefSeq" id="NP_178054.1">
    <property type="nucleotide sequence ID" value="NM_106584.3"/>
</dbReference>
<dbReference type="SMR" id="O64515"/>
<dbReference type="FunCoup" id="O64515">
    <property type="interactions" value="34"/>
</dbReference>
<dbReference type="STRING" id="3702.O64515"/>
<dbReference type="PaxDb" id="3702-AT1G79360.1"/>
<dbReference type="ProteomicsDB" id="250863"/>
<dbReference type="EnsemblPlants" id="AT1G79360.1">
    <property type="protein sequence ID" value="AT1G79360.1"/>
    <property type="gene ID" value="AT1G79360"/>
</dbReference>
<dbReference type="GeneID" id="844274"/>
<dbReference type="Gramene" id="AT1G79360.1">
    <property type="protein sequence ID" value="AT1G79360.1"/>
    <property type="gene ID" value="AT1G79360"/>
</dbReference>
<dbReference type="KEGG" id="ath:AT1G79360"/>
<dbReference type="Araport" id="AT1G79360"/>
<dbReference type="TAIR" id="AT1G79360">
    <property type="gene designation" value="OCT2"/>
</dbReference>
<dbReference type="eggNOG" id="KOG0255">
    <property type="taxonomic scope" value="Eukaryota"/>
</dbReference>
<dbReference type="HOGENOM" id="CLU_001265_33_5_1"/>
<dbReference type="InParanoid" id="O64515"/>
<dbReference type="OMA" id="WTSIPTI"/>
<dbReference type="OrthoDB" id="5296287at2759"/>
<dbReference type="PhylomeDB" id="O64515"/>
<dbReference type="PRO" id="PR:O64515"/>
<dbReference type="Proteomes" id="UP000006548">
    <property type="component" value="Chromosome 1"/>
</dbReference>
<dbReference type="ExpressionAtlas" id="O64515">
    <property type="expression patterns" value="baseline and differential"/>
</dbReference>
<dbReference type="GO" id="GO:0009705">
    <property type="term" value="C:plant-type vacuole membrane"/>
    <property type="evidence" value="ECO:0000314"/>
    <property type="project" value="UniProtKB"/>
</dbReference>
<dbReference type="GO" id="GO:0005524">
    <property type="term" value="F:ATP binding"/>
    <property type="evidence" value="ECO:0007669"/>
    <property type="project" value="UniProtKB-KW"/>
</dbReference>
<dbReference type="GO" id="GO:0022857">
    <property type="term" value="F:transmembrane transporter activity"/>
    <property type="evidence" value="ECO:0007669"/>
    <property type="project" value="InterPro"/>
</dbReference>
<dbReference type="GO" id="GO:0006811">
    <property type="term" value="P:monoatomic ion transport"/>
    <property type="evidence" value="ECO:0007669"/>
    <property type="project" value="UniProtKB-KW"/>
</dbReference>
<dbReference type="CDD" id="cd17378">
    <property type="entry name" value="MFS_OCT_plant"/>
    <property type="match status" value="1"/>
</dbReference>
<dbReference type="FunFam" id="1.20.1250.20:FF:000417">
    <property type="entry name" value="Organic cation/carnitine transporter 1"/>
    <property type="match status" value="1"/>
</dbReference>
<dbReference type="Gene3D" id="1.20.1250.20">
    <property type="entry name" value="MFS general substrate transporter like domains"/>
    <property type="match status" value="1"/>
</dbReference>
<dbReference type="InterPro" id="IPR020846">
    <property type="entry name" value="MFS_dom"/>
</dbReference>
<dbReference type="InterPro" id="IPR005828">
    <property type="entry name" value="MFS_sugar_transport-like"/>
</dbReference>
<dbReference type="InterPro" id="IPR036259">
    <property type="entry name" value="MFS_trans_sf"/>
</dbReference>
<dbReference type="PANTHER" id="PTHR24064">
    <property type="entry name" value="SOLUTE CARRIER FAMILY 22 MEMBER"/>
    <property type="match status" value="1"/>
</dbReference>
<dbReference type="Pfam" id="PF00083">
    <property type="entry name" value="Sugar_tr"/>
    <property type="match status" value="1"/>
</dbReference>
<dbReference type="SUPFAM" id="SSF103473">
    <property type="entry name" value="MFS general substrate transporter"/>
    <property type="match status" value="1"/>
</dbReference>
<dbReference type="PROSITE" id="PS50850">
    <property type="entry name" value="MFS"/>
    <property type="match status" value="1"/>
</dbReference>
<evidence type="ECO:0000250" key="1"/>
<evidence type="ECO:0000255" key="2"/>
<evidence type="ECO:0000269" key="3">
    <source>
    </source>
</evidence>
<evidence type="ECO:0000269" key="4">
    <source>
    </source>
</evidence>
<evidence type="ECO:0000269" key="5">
    <source>
    </source>
</evidence>
<evidence type="ECO:0000305" key="6"/>
<gene>
    <name type="primary">OCT2</name>
    <name type="synonym">2-Oct</name>
    <name type="ordered locus">At1g79360</name>
    <name type="ORF">YUP8H12R.2</name>
</gene>
<proteinExistence type="evidence at transcript level"/>
<feature type="chain" id="PRO_0000415358" description="Organic cation/carnitine transporter 2">
    <location>
        <begin position="1"/>
        <end position="527"/>
    </location>
</feature>
<feature type="topological domain" description="Cytoplasmic" evidence="2">
    <location>
        <begin position="1"/>
        <end position="27"/>
    </location>
</feature>
<feature type="transmembrane region" description="Helical; Name=1" evidence="2">
    <location>
        <begin position="28"/>
        <end position="48"/>
    </location>
</feature>
<feature type="topological domain" description="Extracellular" evidence="2">
    <location>
        <begin position="49"/>
        <end position="119"/>
    </location>
</feature>
<feature type="transmembrane region" description="Helical; Name=2" evidence="2">
    <location>
        <begin position="120"/>
        <end position="140"/>
    </location>
</feature>
<feature type="topological domain" description="Cytoplasmic" evidence="2">
    <location>
        <begin position="141"/>
        <end position="149"/>
    </location>
</feature>
<feature type="transmembrane region" description="Helical; Name=3" evidence="2">
    <location>
        <begin position="150"/>
        <end position="170"/>
    </location>
</feature>
<feature type="topological domain" description="Extracellular" evidence="2">
    <location>
        <begin position="171"/>
        <end position="176"/>
    </location>
</feature>
<feature type="transmembrane region" description="Helical; Name=4" evidence="2">
    <location>
        <begin position="177"/>
        <end position="195"/>
    </location>
</feature>
<feature type="topological domain" description="Cytoplasmic" evidence="2">
    <location>
        <begin position="196"/>
        <end position="201"/>
    </location>
</feature>
<feature type="transmembrane region" description="Helical; Name=5" evidence="2">
    <location>
        <begin position="202"/>
        <end position="222"/>
    </location>
</feature>
<feature type="topological domain" description="Extracellular" evidence="2">
    <location>
        <begin position="223"/>
        <end position="230"/>
    </location>
</feature>
<feature type="transmembrane region" description="Helical; Name=6" evidence="2">
    <location>
        <begin position="231"/>
        <end position="251"/>
    </location>
</feature>
<feature type="topological domain" description="Cytoplasmic" evidence="2">
    <location>
        <begin position="252"/>
        <end position="326"/>
    </location>
</feature>
<feature type="transmembrane region" description="Helical; Name=7" evidence="2">
    <location>
        <begin position="327"/>
        <end position="347"/>
    </location>
</feature>
<feature type="topological domain" description="Extracellular" evidence="2">
    <location>
        <begin position="348"/>
        <end position="356"/>
    </location>
</feature>
<feature type="transmembrane region" description="Helical; Name=8" evidence="2">
    <location>
        <begin position="357"/>
        <end position="377"/>
    </location>
</feature>
<feature type="topological domain" description="Cytoplasmic" evidence="2">
    <location>
        <begin position="378"/>
        <end position="385"/>
    </location>
</feature>
<feature type="transmembrane region" description="Helical; Name=9" evidence="2">
    <location>
        <begin position="386"/>
        <end position="406"/>
    </location>
</feature>
<feature type="topological domain" description="Extracellular" evidence="2">
    <location>
        <begin position="407"/>
        <end position="415"/>
    </location>
</feature>
<feature type="transmembrane region" description="Helical; Name=10" evidence="2">
    <location>
        <begin position="416"/>
        <end position="436"/>
    </location>
</feature>
<feature type="topological domain" description="Cytoplasmic" evidence="2">
    <location>
        <begin position="437"/>
        <end position="448"/>
    </location>
</feature>
<feature type="transmembrane region" description="Helical; Name=11" evidence="2">
    <location>
        <begin position="449"/>
        <end position="469"/>
    </location>
</feature>
<feature type="topological domain" description="Extracellular" evidence="2">
    <location>
        <begin position="470"/>
        <end position="475"/>
    </location>
</feature>
<feature type="transmembrane region" description="Helical; Name=12" evidence="2">
    <location>
        <begin position="476"/>
        <end position="496"/>
    </location>
</feature>
<feature type="topological domain" description="Cytoplasmic" evidence="2">
    <location>
        <begin position="497"/>
        <end position="527"/>
    </location>
</feature>
<feature type="binding site" evidence="2">
    <location>
        <begin position="190"/>
        <end position="197"/>
    </location>
    <ligand>
        <name>ATP</name>
        <dbReference type="ChEBI" id="CHEBI:30616"/>
    </ligand>
</feature>
<reference key="1">
    <citation type="journal article" date="2000" name="Nature">
        <title>Sequence and analysis of chromosome 1 of the plant Arabidopsis thaliana.</title>
        <authorList>
            <person name="Theologis A."/>
            <person name="Ecker J.R."/>
            <person name="Palm C.J."/>
            <person name="Federspiel N.A."/>
            <person name="Kaul S."/>
            <person name="White O."/>
            <person name="Alonso J."/>
            <person name="Altafi H."/>
            <person name="Araujo R."/>
            <person name="Bowman C.L."/>
            <person name="Brooks S.Y."/>
            <person name="Buehler E."/>
            <person name="Chan A."/>
            <person name="Chao Q."/>
            <person name="Chen H."/>
            <person name="Cheuk R.F."/>
            <person name="Chin C.W."/>
            <person name="Chung M.K."/>
            <person name="Conn L."/>
            <person name="Conway A.B."/>
            <person name="Conway A.R."/>
            <person name="Creasy T.H."/>
            <person name="Dewar K."/>
            <person name="Dunn P."/>
            <person name="Etgu P."/>
            <person name="Feldblyum T.V."/>
            <person name="Feng J.-D."/>
            <person name="Fong B."/>
            <person name="Fujii C.Y."/>
            <person name="Gill J.E."/>
            <person name="Goldsmith A.D."/>
            <person name="Haas B."/>
            <person name="Hansen N.F."/>
            <person name="Hughes B."/>
            <person name="Huizar L."/>
            <person name="Hunter J.L."/>
            <person name="Jenkins J."/>
            <person name="Johnson-Hopson C."/>
            <person name="Khan S."/>
            <person name="Khaykin E."/>
            <person name="Kim C.J."/>
            <person name="Koo H.L."/>
            <person name="Kremenetskaia I."/>
            <person name="Kurtz D.B."/>
            <person name="Kwan A."/>
            <person name="Lam B."/>
            <person name="Langin-Hooper S."/>
            <person name="Lee A."/>
            <person name="Lee J.M."/>
            <person name="Lenz C.A."/>
            <person name="Li J.H."/>
            <person name="Li Y.-P."/>
            <person name="Lin X."/>
            <person name="Liu S.X."/>
            <person name="Liu Z.A."/>
            <person name="Luros J.S."/>
            <person name="Maiti R."/>
            <person name="Marziali A."/>
            <person name="Militscher J."/>
            <person name="Miranda M."/>
            <person name="Nguyen M."/>
            <person name="Nierman W.C."/>
            <person name="Osborne B.I."/>
            <person name="Pai G."/>
            <person name="Peterson J."/>
            <person name="Pham P.K."/>
            <person name="Rizzo M."/>
            <person name="Rooney T."/>
            <person name="Rowley D."/>
            <person name="Sakano H."/>
            <person name="Salzberg S.L."/>
            <person name="Schwartz J.R."/>
            <person name="Shinn P."/>
            <person name="Southwick A.M."/>
            <person name="Sun H."/>
            <person name="Tallon L.J."/>
            <person name="Tambunga G."/>
            <person name="Toriumi M.J."/>
            <person name="Town C.D."/>
            <person name="Utterback T."/>
            <person name="Van Aken S."/>
            <person name="Vaysberg M."/>
            <person name="Vysotskaia V.S."/>
            <person name="Walker M."/>
            <person name="Wu D."/>
            <person name="Yu G."/>
            <person name="Fraser C.M."/>
            <person name="Venter J.C."/>
            <person name="Davis R.W."/>
        </authorList>
    </citation>
    <scope>NUCLEOTIDE SEQUENCE [LARGE SCALE GENOMIC DNA]</scope>
    <source>
        <strain>cv. Columbia</strain>
    </source>
</reference>
<reference key="2">
    <citation type="journal article" date="2017" name="Plant J.">
        <title>Araport11: a complete reannotation of the Arabidopsis thaliana reference genome.</title>
        <authorList>
            <person name="Cheng C.Y."/>
            <person name="Krishnakumar V."/>
            <person name="Chan A.P."/>
            <person name="Thibaud-Nissen F."/>
            <person name="Schobel S."/>
            <person name="Town C.D."/>
        </authorList>
    </citation>
    <scope>GENOME REANNOTATION</scope>
    <source>
        <strain>cv. Columbia</strain>
    </source>
</reference>
<reference key="3">
    <citation type="submission" date="2006-07" db="EMBL/GenBank/DDBJ databases">
        <title>Large-scale analysis of RIKEN Arabidopsis full-length (RAFL) cDNAs.</title>
        <authorList>
            <person name="Totoki Y."/>
            <person name="Seki M."/>
            <person name="Ishida J."/>
            <person name="Nakajima M."/>
            <person name="Enju A."/>
            <person name="Kamiya A."/>
            <person name="Narusaka M."/>
            <person name="Shin-i T."/>
            <person name="Nakagawa M."/>
            <person name="Sakamoto N."/>
            <person name="Oishi K."/>
            <person name="Kohara Y."/>
            <person name="Kobayashi M."/>
            <person name="Toyoda A."/>
            <person name="Sakaki Y."/>
            <person name="Sakurai T."/>
            <person name="Iida K."/>
            <person name="Akiyama K."/>
            <person name="Satou M."/>
            <person name="Toyoda T."/>
            <person name="Konagaya A."/>
            <person name="Carninci P."/>
            <person name="Kawai J."/>
            <person name="Hayashizaki Y."/>
            <person name="Shinozaki K."/>
        </authorList>
    </citation>
    <scope>NUCLEOTIDE SEQUENCE [LARGE SCALE MRNA]</scope>
    <source>
        <strain>cv. Columbia</strain>
    </source>
</reference>
<reference key="4">
    <citation type="journal article" date="2006" name="Plant Physiol.">
        <title>Integrating membrane transport with male gametophyte development and function through transcriptomics.</title>
        <authorList>
            <person name="Bock K.W."/>
            <person name="Honys D."/>
            <person name="Ward J.M."/>
            <person name="Padmanaban S."/>
            <person name="Nawrocki E.P."/>
            <person name="Hirschi K.D."/>
            <person name="Twell D."/>
            <person name="Sze H."/>
        </authorList>
    </citation>
    <scope>TISSUE SPECIFICITY [LARGE SCALE ANALYSIS]</scope>
</reference>
<reference key="5">
    <citation type="journal article" date="2008" name="BMC Res. Notes">
        <title>Stress regulated members of the plant organic cation transporter family are localized to the vacuolar membrane.</title>
        <authorList>
            <person name="Kuefner I."/>
            <person name="Koch W."/>
        </authorList>
    </citation>
    <scope>SUBCELLULAR LOCATION</scope>
    <scope>TISSUE SPECIFICITY</scope>
    <source>
        <strain>cv. Columbia</strain>
    </source>
</reference>
<reference key="6">
    <citation type="journal article" date="2008" name="Plant J.">
        <title>Protonophore- and pH-insensitive glucose and sucrose accumulation detected by FRET nanosensors in Arabidopsis root tips.</title>
        <authorList>
            <person name="Chaudhuri B."/>
            <person name="Hoermann F."/>
            <person name="Lalonde S."/>
            <person name="Brady S.M."/>
            <person name="Orlando D.A."/>
            <person name="Benfey P."/>
            <person name="Frommer W.B."/>
        </authorList>
    </citation>
    <scope>TISSUE SPECIFICITY [LARGE SCALE ANALYSIS]</scope>
</reference>
<sequence length="527" mass="57750">MAEPTQPLLTDSNSSSPRSLDDTIESYIGSFGWAQFLQAALVSFSGVFDAQQTFISVFTDSEPTWHCTDSNSICHESISNICILPKTAWSWDYSPHVSVISEWGLQCAGSFVKGLPESSFFVGCLIGGLVLSTLADSSLGRKNMLFLSCLVMAISTMLTVFSPNIWVYAVLRFVNGFGRATIGTCALVLSTELVGKKWRGRVGIMSFFGFMLGFLSLPLMAYMNRGSSWRILYAWTSIPTIIYCVLVRFFVCESPRWLFVRGRREEAISILKRVASIPSTDVSSGGAISMSFSSLPFEEDEEKPSTNVNIFTTMKVLVEKRWALKRLSAVMAIAFGIGLVYYGMPLALSNLDFNIYLSAAFNALMDLPANLITLFLVDKLSRRNALIGFTALGGVSSVLIFALHNMRIGNHGALQLALELISYFSACSAFNMEMIYTIELFPTCVRNSAIAMARQALVLGGVFSPIMVAAGRKNAFWSFGLFGLAIGLLGLFAVGLPETRGSDLCDTMDEEECKDRRSKVAVNNVIA</sequence>
<accession>O64515</accession>
<keyword id="KW-0067">ATP-binding</keyword>
<keyword id="KW-0406">Ion transport</keyword>
<keyword id="KW-0472">Membrane</keyword>
<keyword id="KW-0547">Nucleotide-binding</keyword>
<keyword id="KW-1185">Reference proteome</keyword>
<keyword id="KW-0812">Transmembrane</keyword>
<keyword id="KW-1133">Transmembrane helix</keyword>
<keyword id="KW-0813">Transport</keyword>
<keyword id="KW-0926">Vacuole</keyword>
<organism>
    <name type="scientific">Arabidopsis thaliana</name>
    <name type="common">Mouse-ear cress</name>
    <dbReference type="NCBI Taxonomy" id="3702"/>
    <lineage>
        <taxon>Eukaryota</taxon>
        <taxon>Viridiplantae</taxon>
        <taxon>Streptophyta</taxon>
        <taxon>Embryophyta</taxon>
        <taxon>Tracheophyta</taxon>
        <taxon>Spermatophyta</taxon>
        <taxon>Magnoliopsida</taxon>
        <taxon>eudicotyledons</taxon>
        <taxon>Gunneridae</taxon>
        <taxon>Pentapetalae</taxon>
        <taxon>rosids</taxon>
        <taxon>malvids</taxon>
        <taxon>Brassicales</taxon>
        <taxon>Brassicaceae</taxon>
        <taxon>Camelineae</taxon>
        <taxon>Arabidopsis</taxon>
    </lineage>
</organism>
<comment type="function">
    <text evidence="1">High affinity carnitine transporter involved in the active cellular uptake of carnitine. Also transports organic cations (By similarity).</text>
</comment>
<comment type="subcellular location">
    <subcellularLocation>
        <location evidence="5">Vacuole membrane</location>
        <topology evidence="5">Multi-pass membrane protein</topology>
    </subcellularLocation>
</comment>
<comment type="tissue specificity">
    <text evidence="3 4 5">Weakly expressed in roots, including tips and initiation site of lateral roots, siliques and flowers, especially in pollen and stigma.</text>
</comment>
<comment type="similarity">
    <text evidence="6">Belongs to the major facilitator (TC 2.A.1) superfamily. Organic cation transporter (TC 2.A.1.19) family.</text>
</comment>
<protein>
    <recommendedName>
        <fullName>Organic cation/carnitine transporter 2</fullName>
        <shortName>AtOCT2</shortName>
    </recommendedName>
</protein>